<organism>
    <name type="scientific">Protochlamydia amoebophila (strain UWE25)</name>
    <dbReference type="NCBI Taxonomy" id="264201"/>
    <lineage>
        <taxon>Bacteria</taxon>
        <taxon>Pseudomonadati</taxon>
        <taxon>Chlamydiota</taxon>
        <taxon>Chlamydiia</taxon>
        <taxon>Parachlamydiales</taxon>
        <taxon>Parachlamydiaceae</taxon>
        <taxon>Candidatus Protochlamydia</taxon>
    </lineage>
</organism>
<dbReference type="EMBL" id="BX908798">
    <property type="protein sequence ID" value="CAF23156.1"/>
    <property type="molecule type" value="Genomic_DNA"/>
</dbReference>
<dbReference type="RefSeq" id="WP_011174982.1">
    <property type="nucleotide sequence ID" value="NC_005861.2"/>
</dbReference>
<dbReference type="SMR" id="Q6ME43"/>
<dbReference type="STRING" id="264201.pc0432"/>
<dbReference type="KEGG" id="pcu:PC_RS02110"/>
<dbReference type="eggNOG" id="COG0100">
    <property type="taxonomic scope" value="Bacteria"/>
</dbReference>
<dbReference type="HOGENOM" id="CLU_072439_5_0_0"/>
<dbReference type="OrthoDB" id="9806415at2"/>
<dbReference type="Proteomes" id="UP000000529">
    <property type="component" value="Chromosome"/>
</dbReference>
<dbReference type="GO" id="GO:1990904">
    <property type="term" value="C:ribonucleoprotein complex"/>
    <property type="evidence" value="ECO:0007669"/>
    <property type="project" value="UniProtKB-KW"/>
</dbReference>
<dbReference type="GO" id="GO:0005840">
    <property type="term" value="C:ribosome"/>
    <property type="evidence" value="ECO:0007669"/>
    <property type="project" value="UniProtKB-KW"/>
</dbReference>
<dbReference type="GO" id="GO:0019843">
    <property type="term" value="F:rRNA binding"/>
    <property type="evidence" value="ECO:0007669"/>
    <property type="project" value="UniProtKB-UniRule"/>
</dbReference>
<dbReference type="GO" id="GO:0003735">
    <property type="term" value="F:structural constituent of ribosome"/>
    <property type="evidence" value="ECO:0007669"/>
    <property type="project" value="InterPro"/>
</dbReference>
<dbReference type="GO" id="GO:0006412">
    <property type="term" value="P:translation"/>
    <property type="evidence" value="ECO:0007669"/>
    <property type="project" value="UniProtKB-UniRule"/>
</dbReference>
<dbReference type="FunFam" id="3.30.420.80:FF:000004">
    <property type="entry name" value="30S ribosomal protein S11"/>
    <property type="match status" value="1"/>
</dbReference>
<dbReference type="Gene3D" id="3.30.420.80">
    <property type="entry name" value="Ribosomal protein S11"/>
    <property type="match status" value="1"/>
</dbReference>
<dbReference type="HAMAP" id="MF_01310">
    <property type="entry name" value="Ribosomal_uS11"/>
    <property type="match status" value="1"/>
</dbReference>
<dbReference type="InterPro" id="IPR001971">
    <property type="entry name" value="Ribosomal_uS11"/>
</dbReference>
<dbReference type="InterPro" id="IPR019981">
    <property type="entry name" value="Ribosomal_uS11_bac-type"/>
</dbReference>
<dbReference type="InterPro" id="IPR018102">
    <property type="entry name" value="Ribosomal_uS11_CS"/>
</dbReference>
<dbReference type="InterPro" id="IPR036967">
    <property type="entry name" value="Ribosomal_uS11_sf"/>
</dbReference>
<dbReference type="NCBIfam" id="NF003698">
    <property type="entry name" value="PRK05309.1"/>
    <property type="match status" value="1"/>
</dbReference>
<dbReference type="NCBIfam" id="TIGR03632">
    <property type="entry name" value="uS11_bact"/>
    <property type="match status" value="1"/>
</dbReference>
<dbReference type="PANTHER" id="PTHR11759">
    <property type="entry name" value="40S RIBOSOMAL PROTEIN S14/30S RIBOSOMAL PROTEIN S11"/>
    <property type="match status" value="1"/>
</dbReference>
<dbReference type="Pfam" id="PF00411">
    <property type="entry name" value="Ribosomal_S11"/>
    <property type="match status" value="1"/>
</dbReference>
<dbReference type="PIRSF" id="PIRSF002131">
    <property type="entry name" value="Ribosomal_S11"/>
    <property type="match status" value="1"/>
</dbReference>
<dbReference type="SUPFAM" id="SSF53137">
    <property type="entry name" value="Translational machinery components"/>
    <property type="match status" value="1"/>
</dbReference>
<dbReference type="PROSITE" id="PS00054">
    <property type="entry name" value="RIBOSOMAL_S11"/>
    <property type="match status" value="1"/>
</dbReference>
<reference key="1">
    <citation type="journal article" date="2004" name="Science">
        <title>Illuminating the evolutionary history of chlamydiae.</title>
        <authorList>
            <person name="Horn M."/>
            <person name="Collingro A."/>
            <person name="Schmitz-Esser S."/>
            <person name="Beier C.L."/>
            <person name="Purkhold U."/>
            <person name="Fartmann B."/>
            <person name="Brandt P."/>
            <person name="Nyakatura G.J."/>
            <person name="Droege M."/>
            <person name="Frishman D."/>
            <person name="Rattei T."/>
            <person name="Mewes H.-W."/>
            <person name="Wagner M."/>
        </authorList>
    </citation>
    <scope>NUCLEOTIDE SEQUENCE [LARGE SCALE GENOMIC DNA]</scope>
    <source>
        <strain>UWE25</strain>
    </source>
</reference>
<comment type="function">
    <text evidence="1">Located on the platform of the 30S subunit, it bridges several disparate RNA helices of the 16S rRNA. Forms part of the Shine-Dalgarno cleft in the 70S ribosome.</text>
</comment>
<comment type="subunit">
    <text evidence="1">Part of the 30S ribosomal subunit. Interacts with proteins S7 and S18. Binds to IF-3.</text>
</comment>
<comment type="similarity">
    <text evidence="1">Belongs to the universal ribosomal protein uS11 family.</text>
</comment>
<gene>
    <name evidence="1" type="primary">rpsK</name>
    <name type="ordered locus">pc0432</name>
</gene>
<evidence type="ECO:0000255" key="1">
    <source>
        <dbReference type="HAMAP-Rule" id="MF_01310"/>
    </source>
</evidence>
<evidence type="ECO:0000305" key="2"/>
<protein>
    <recommendedName>
        <fullName evidence="1">Small ribosomal subunit protein uS11</fullName>
    </recommendedName>
    <alternativeName>
        <fullName evidence="2">30S ribosomal protein S11</fullName>
    </alternativeName>
</protein>
<name>RS11_PARUW</name>
<sequence length="135" mass="14137">MSKQPATNKKPVKAKKKAFQNVPSGIAHVKATFNNTIIAITDPSGRVISWASAGKVNFSGSRKSSAFAATVAAQDAAKTASSLGMKEVEVNLKGPGAGRESAVRGLQSAGLTITAIRDTTPVPHNGCRPRKRRRV</sequence>
<proteinExistence type="inferred from homology"/>
<keyword id="KW-1185">Reference proteome</keyword>
<keyword id="KW-0687">Ribonucleoprotein</keyword>
<keyword id="KW-0689">Ribosomal protein</keyword>
<keyword id="KW-0694">RNA-binding</keyword>
<keyword id="KW-0699">rRNA-binding</keyword>
<feature type="chain" id="PRO_0000123192" description="Small ribosomal subunit protein uS11">
    <location>
        <begin position="1"/>
        <end position="135"/>
    </location>
</feature>
<accession>Q6ME43</accession>